<dbReference type="EC" id="1.17.7.3" evidence="1"/>
<dbReference type="EMBL" id="CP000348">
    <property type="protein sequence ID" value="ABJ79733.1"/>
    <property type="molecule type" value="Genomic_DNA"/>
</dbReference>
<dbReference type="RefSeq" id="WP_011670735.1">
    <property type="nucleotide sequence ID" value="NC_008508.1"/>
</dbReference>
<dbReference type="SMR" id="Q04YW2"/>
<dbReference type="KEGG" id="lbl:LBL_2341"/>
<dbReference type="HOGENOM" id="CLU_012689_0_0_12"/>
<dbReference type="UniPathway" id="UPA00056">
    <property type="reaction ID" value="UER00096"/>
</dbReference>
<dbReference type="GO" id="GO:0051539">
    <property type="term" value="F:4 iron, 4 sulfur cluster binding"/>
    <property type="evidence" value="ECO:0007669"/>
    <property type="project" value="UniProtKB-UniRule"/>
</dbReference>
<dbReference type="GO" id="GO:0046429">
    <property type="term" value="F:4-hydroxy-3-methylbut-2-en-1-yl diphosphate synthase activity (ferredoxin)"/>
    <property type="evidence" value="ECO:0007669"/>
    <property type="project" value="UniProtKB-UniRule"/>
</dbReference>
<dbReference type="GO" id="GO:0141197">
    <property type="term" value="F:4-hydroxy-3-methylbut-2-enyl-diphosphate synthase activity (flavodoxin)"/>
    <property type="evidence" value="ECO:0007669"/>
    <property type="project" value="UniProtKB-EC"/>
</dbReference>
<dbReference type="GO" id="GO:0005506">
    <property type="term" value="F:iron ion binding"/>
    <property type="evidence" value="ECO:0007669"/>
    <property type="project" value="InterPro"/>
</dbReference>
<dbReference type="GO" id="GO:0019288">
    <property type="term" value="P:isopentenyl diphosphate biosynthetic process, methylerythritol 4-phosphate pathway"/>
    <property type="evidence" value="ECO:0007669"/>
    <property type="project" value="UniProtKB-UniRule"/>
</dbReference>
<dbReference type="GO" id="GO:0016114">
    <property type="term" value="P:terpenoid biosynthetic process"/>
    <property type="evidence" value="ECO:0007669"/>
    <property type="project" value="InterPro"/>
</dbReference>
<dbReference type="FunFam" id="3.20.20.20:FF:000005">
    <property type="entry name" value="4-hydroxy-3-methylbut-2-en-1-yl diphosphate synthase (flavodoxin)"/>
    <property type="match status" value="1"/>
</dbReference>
<dbReference type="FunFam" id="3.30.413.10:FF:000006">
    <property type="entry name" value="4-hydroxy-3-methylbut-2-en-1-yl diphosphate synthase (flavodoxin)"/>
    <property type="match status" value="1"/>
</dbReference>
<dbReference type="Gene3D" id="3.20.20.20">
    <property type="entry name" value="Dihydropteroate synthase-like"/>
    <property type="match status" value="2"/>
</dbReference>
<dbReference type="Gene3D" id="3.30.413.10">
    <property type="entry name" value="Sulfite Reductase Hemoprotein, domain 1"/>
    <property type="match status" value="1"/>
</dbReference>
<dbReference type="HAMAP" id="MF_00159">
    <property type="entry name" value="IspG"/>
    <property type="match status" value="1"/>
</dbReference>
<dbReference type="InterPro" id="IPR011005">
    <property type="entry name" value="Dihydropteroate_synth-like_sf"/>
</dbReference>
<dbReference type="InterPro" id="IPR017178">
    <property type="entry name" value="IspG_atypical"/>
</dbReference>
<dbReference type="InterPro" id="IPR004588">
    <property type="entry name" value="IspG_bac-typ"/>
</dbReference>
<dbReference type="InterPro" id="IPR045854">
    <property type="entry name" value="NO2/SO3_Rdtase_4Fe4S_sf"/>
</dbReference>
<dbReference type="NCBIfam" id="TIGR00612">
    <property type="entry name" value="ispG_gcpE"/>
    <property type="match status" value="1"/>
</dbReference>
<dbReference type="PANTHER" id="PTHR30454">
    <property type="entry name" value="4-HYDROXY-3-METHYLBUT-2-EN-1-YL DIPHOSPHATE SYNTHASE"/>
    <property type="match status" value="1"/>
</dbReference>
<dbReference type="PANTHER" id="PTHR30454:SF0">
    <property type="entry name" value="4-HYDROXY-3-METHYLBUT-2-EN-1-YL DIPHOSPHATE SYNTHASE (FERREDOXIN), CHLOROPLASTIC"/>
    <property type="match status" value="1"/>
</dbReference>
<dbReference type="Pfam" id="PF04551">
    <property type="entry name" value="GcpE"/>
    <property type="match status" value="2"/>
</dbReference>
<dbReference type="PIRSF" id="PIRSF037336">
    <property type="entry name" value="IspG_like"/>
    <property type="match status" value="1"/>
</dbReference>
<dbReference type="SUPFAM" id="SSF56014">
    <property type="entry name" value="Nitrite and sulphite reductase 4Fe-4S domain-like"/>
    <property type="match status" value="1"/>
</dbReference>
<protein>
    <recommendedName>
        <fullName evidence="1">4-hydroxy-3-methylbut-2-en-1-yl diphosphate synthase (flavodoxin)</fullName>
        <ecNumber evidence="1">1.17.7.3</ecNumber>
    </recommendedName>
    <alternativeName>
        <fullName evidence="1">1-hydroxy-2-methyl-2-(E)-butenyl 4-diphosphate synthase</fullName>
    </alternativeName>
</protein>
<keyword id="KW-0004">4Fe-4S</keyword>
<keyword id="KW-0408">Iron</keyword>
<keyword id="KW-0411">Iron-sulfur</keyword>
<keyword id="KW-0414">Isoprene biosynthesis</keyword>
<keyword id="KW-0479">Metal-binding</keyword>
<keyword id="KW-0560">Oxidoreductase</keyword>
<evidence type="ECO:0000255" key="1">
    <source>
        <dbReference type="HAMAP-Rule" id="MF_00159"/>
    </source>
</evidence>
<organism>
    <name type="scientific">Leptospira borgpetersenii serovar Hardjo-bovis (strain L550)</name>
    <dbReference type="NCBI Taxonomy" id="355276"/>
    <lineage>
        <taxon>Bacteria</taxon>
        <taxon>Pseudomonadati</taxon>
        <taxon>Spirochaetota</taxon>
        <taxon>Spirochaetia</taxon>
        <taxon>Leptospirales</taxon>
        <taxon>Leptospiraceae</taxon>
        <taxon>Leptospira</taxon>
    </lineage>
</organism>
<name>ISPG_LEPBL</name>
<comment type="function">
    <text evidence="1">Converts 2C-methyl-D-erythritol 2,4-cyclodiphosphate (ME-2,4cPP) into 1-hydroxy-2-methyl-2-(E)-butenyl 4-diphosphate.</text>
</comment>
<comment type="catalytic activity">
    <reaction evidence="1">
        <text>(2E)-4-hydroxy-3-methylbut-2-enyl diphosphate + oxidized [flavodoxin] + H2O + 2 H(+) = 2-C-methyl-D-erythritol 2,4-cyclic diphosphate + reduced [flavodoxin]</text>
        <dbReference type="Rhea" id="RHEA:43604"/>
        <dbReference type="Rhea" id="RHEA-COMP:10622"/>
        <dbReference type="Rhea" id="RHEA-COMP:10623"/>
        <dbReference type="ChEBI" id="CHEBI:15377"/>
        <dbReference type="ChEBI" id="CHEBI:15378"/>
        <dbReference type="ChEBI" id="CHEBI:57618"/>
        <dbReference type="ChEBI" id="CHEBI:58210"/>
        <dbReference type="ChEBI" id="CHEBI:58483"/>
        <dbReference type="ChEBI" id="CHEBI:128753"/>
        <dbReference type="EC" id="1.17.7.3"/>
    </reaction>
</comment>
<comment type="cofactor">
    <cofactor evidence="1">
        <name>[4Fe-4S] cluster</name>
        <dbReference type="ChEBI" id="CHEBI:49883"/>
    </cofactor>
    <text evidence="1">Binds 1 [4Fe-4S] cluster.</text>
</comment>
<comment type="pathway">
    <text evidence="1">Isoprenoid biosynthesis; isopentenyl diphosphate biosynthesis via DXP pathway; isopentenyl diphosphate from 1-deoxy-D-xylulose 5-phosphate: step 5/6.</text>
</comment>
<comment type="similarity">
    <text evidence="1">Belongs to the IspG family.</text>
</comment>
<reference key="1">
    <citation type="journal article" date="2006" name="Proc. Natl. Acad. Sci. U.S.A.">
        <title>Genome reduction in Leptospira borgpetersenii reflects limited transmission potential.</title>
        <authorList>
            <person name="Bulach D.M."/>
            <person name="Zuerner R.L."/>
            <person name="Wilson P."/>
            <person name="Seemann T."/>
            <person name="McGrath A."/>
            <person name="Cullen P.A."/>
            <person name="Davis J."/>
            <person name="Johnson M."/>
            <person name="Kuczek E."/>
            <person name="Alt D.P."/>
            <person name="Peterson-Burch B."/>
            <person name="Coppel R.L."/>
            <person name="Rood J.I."/>
            <person name="Davies J.K."/>
            <person name="Adler B."/>
        </authorList>
    </citation>
    <scope>NUCLEOTIDE SEQUENCE [LARGE SCALE GENOMIC DNA]</scope>
    <source>
        <strain>L550</strain>
    </source>
</reference>
<gene>
    <name evidence="1" type="primary">ispG</name>
    <name type="ordered locus">LBL_2341</name>
</gene>
<feature type="chain" id="PRO_1000011480" description="4-hydroxy-3-methylbut-2-en-1-yl diphosphate synthase (flavodoxin)">
    <location>
        <begin position="1"/>
        <end position="663"/>
    </location>
</feature>
<feature type="binding site" evidence="1">
    <location>
        <position position="568"/>
    </location>
    <ligand>
        <name>[4Fe-4S] cluster</name>
        <dbReference type="ChEBI" id="CHEBI:49883"/>
    </ligand>
</feature>
<feature type="binding site" evidence="1">
    <location>
        <position position="571"/>
    </location>
    <ligand>
        <name>[4Fe-4S] cluster</name>
        <dbReference type="ChEBI" id="CHEBI:49883"/>
    </ligand>
</feature>
<feature type="binding site" evidence="1">
    <location>
        <position position="602"/>
    </location>
    <ligand>
        <name>[4Fe-4S] cluster</name>
        <dbReference type="ChEBI" id="CHEBI:49883"/>
    </ligand>
</feature>
<feature type="binding site" evidence="1">
    <location>
        <position position="609"/>
    </location>
    <ligand>
        <name>[4Fe-4S] cluster</name>
        <dbReference type="ChEBI" id="CHEBI:49883"/>
    </ligand>
</feature>
<sequence length="663" mass="74011">MNFRYNHTPFGYKRRQTREVKVGDVKIGGNNPIVIQSMINSDTTDTKGTVKQILELERTGCEIVRFTVPSQVDADNLPSIRQELKKAGSKIPLVADIHFTPSVAMKAVEYVEKVRINPGNFADKKKFAVRDYTDSEYDEELERISAIFSPLVLRCKELGVSMRIGTNHGSLSDRIMNRYGDTPQGMVESALEFIRIAESLNYYDIVVSMKASNPQVMVQAYRMLASRFNELKMDYPLHLGVTEAGDGKDGRIKSAIGIGSLLEDGLGDTIRVSLTEDPVLEIPVARLLAEKFNKRIVKPEPVRGYSEFRNPFTYERFYSSEIKVGTFEAGENHPVRVETVLPFENSNSFLANIAKLYQYGKSFSIEPESILIDSPSPDQLKEISEAAAALSIPVGILLGKNVSLNEKLQNELRGFPKVVFDPFLQFQDGKKMLSFLQERQNAGLYTEIHTSGAKIESFKGLPETLSEIGIKNVLFSIESKEILYDYRKLGSILSQHEFPILLHGSFSNPEEALYDSAIGIGGLLIDGIGDLIRIKTPKMKDIEEIFQLSYDLLQGTRLRLTKTEYISCPSCGRTLFNLQETTARIKSRTGHLKGVKIAVMGCIVNGPGEMADADFGYVGAGPGKVHLYRGKEIVMKNVPSEVADEKLVELIKKHGLWQDVINV</sequence>
<proteinExistence type="inferred from homology"/>
<accession>Q04YW2</accession>